<name>RNZ_GEOKA</name>
<keyword id="KW-0255">Endonuclease</keyword>
<keyword id="KW-0378">Hydrolase</keyword>
<keyword id="KW-0479">Metal-binding</keyword>
<keyword id="KW-0540">Nuclease</keyword>
<keyword id="KW-1185">Reference proteome</keyword>
<keyword id="KW-0819">tRNA processing</keyword>
<keyword id="KW-0862">Zinc</keyword>
<evidence type="ECO:0000255" key="1">
    <source>
        <dbReference type="HAMAP-Rule" id="MF_01818"/>
    </source>
</evidence>
<proteinExistence type="inferred from homology"/>
<organism>
    <name type="scientific">Geobacillus kaustophilus (strain HTA426)</name>
    <dbReference type="NCBI Taxonomy" id="235909"/>
    <lineage>
        <taxon>Bacteria</taxon>
        <taxon>Bacillati</taxon>
        <taxon>Bacillota</taxon>
        <taxon>Bacilli</taxon>
        <taxon>Bacillales</taxon>
        <taxon>Anoxybacillaceae</taxon>
        <taxon>Geobacillus</taxon>
        <taxon>Geobacillus thermoleovorans group</taxon>
    </lineage>
</organism>
<reference key="1">
    <citation type="journal article" date="2004" name="Nucleic Acids Res.">
        <title>Thermoadaptation trait revealed by the genome sequence of thermophilic Geobacillus kaustophilus.</title>
        <authorList>
            <person name="Takami H."/>
            <person name="Takaki Y."/>
            <person name="Chee G.-J."/>
            <person name="Nishi S."/>
            <person name="Shimamura S."/>
            <person name="Suzuki H."/>
            <person name="Matsui S."/>
            <person name="Uchiyama I."/>
        </authorList>
    </citation>
    <scope>NUCLEOTIDE SEQUENCE [LARGE SCALE GENOMIC DNA]</scope>
    <source>
        <strain>HTA426</strain>
    </source>
</reference>
<dbReference type="EC" id="3.1.26.11" evidence="1"/>
<dbReference type="EMBL" id="BA000043">
    <property type="protein sequence ID" value="BAD76618.1"/>
    <property type="molecule type" value="Genomic_DNA"/>
</dbReference>
<dbReference type="RefSeq" id="WP_011231815.1">
    <property type="nucleotide sequence ID" value="NC_006510.1"/>
</dbReference>
<dbReference type="SMR" id="Q5KXG8"/>
<dbReference type="STRING" id="235909.GK2333"/>
<dbReference type="KEGG" id="gka:GK2333"/>
<dbReference type="eggNOG" id="COG1234">
    <property type="taxonomic scope" value="Bacteria"/>
</dbReference>
<dbReference type="HOGENOM" id="CLU_031317_2_0_9"/>
<dbReference type="Proteomes" id="UP000001172">
    <property type="component" value="Chromosome"/>
</dbReference>
<dbReference type="GO" id="GO:0042781">
    <property type="term" value="F:3'-tRNA processing endoribonuclease activity"/>
    <property type="evidence" value="ECO:0007669"/>
    <property type="project" value="UniProtKB-UniRule"/>
</dbReference>
<dbReference type="GO" id="GO:0008270">
    <property type="term" value="F:zinc ion binding"/>
    <property type="evidence" value="ECO:0007669"/>
    <property type="project" value="UniProtKB-UniRule"/>
</dbReference>
<dbReference type="CDD" id="cd07717">
    <property type="entry name" value="RNaseZ_ZiPD-like_MBL-fold"/>
    <property type="match status" value="1"/>
</dbReference>
<dbReference type="FunFam" id="3.60.15.10:FF:000002">
    <property type="entry name" value="Ribonuclease Z"/>
    <property type="match status" value="1"/>
</dbReference>
<dbReference type="Gene3D" id="3.60.15.10">
    <property type="entry name" value="Ribonuclease Z/Hydroxyacylglutathione hydrolase-like"/>
    <property type="match status" value="1"/>
</dbReference>
<dbReference type="HAMAP" id="MF_01818">
    <property type="entry name" value="RNase_Z_BN"/>
    <property type="match status" value="1"/>
</dbReference>
<dbReference type="InterPro" id="IPR001279">
    <property type="entry name" value="Metallo-B-lactamas"/>
</dbReference>
<dbReference type="InterPro" id="IPR036866">
    <property type="entry name" value="RibonucZ/Hydroxyglut_hydro"/>
</dbReference>
<dbReference type="InterPro" id="IPR013471">
    <property type="entry name" value="RNase_Z/BN"/>
</dbReference>
<dbReference type="NCBIfam" id="NF000800">
    <property type="entry name" value="PRK00055.1-1"/>
    <property type="match status" value="1"/>
</dbReference>
<dbReference type="NCBIfam" id="NF000801">
    <property type="entry name" value="PRK00055.1-3"/>
    <property type="match status" value="1"/>
</dbReference>
<dbReference type="NCBIfam" id="TIGR02651">
    <property type="entry name" value="RNase_Z"/>
    <property type="match status" value="1"/>
</dbReference>
<dbReference type="PANTHER" id="PTHR46018">
    <property type="entry name" value="ZINC PHOSPHODIESTERASE ELAC PROTEIN 1"/>
    <property type="match status" value="1"/>
</dbReference>
<dbReference type="PANTHER" id="PTHR46018:SF2">
    <property type="entry name" value="ZINC PHOSPHODIESTERASE ELAC PROTEIN 1"/>
    <property type="match status" value="1"/>
</dbReference>
<dbReference type="Pfam" id="PF00753">
    <property type="entry name" value="Lactamase_B"/>
    <property type="match status" value="1"/>
</dbReference>
<dbReference type="Pfam" id="PF12706">
    <property type="entry name" value="Lactamase_B_2"/>
    <property type="match status" value="1"/>
</dbReference>
<dbReference type="SUPFAM" id="SSF56281">
    <property type="entry name" value="Metallo-hydrolase/oxidoreductase"/>
    <property type="match status" value="1"/>
</dbReference>
<gene>
    <name evidence="1" type="primary">rnz</name>
    <name type="ordered locus">GK2333</name>
</gene>
<comment type="function">
    <text evidence="1">Zinc phosphodiesterase, which displays some tRNA 3'-processing endonuclease activity. Probably involved in tRNA maturation, by removing a 3'-trailer from precursor tRNA.</text>
</comment>
<comment type="catalytic activity">
    <reaction evidence="1">
        <text>Endonucleolytic cleavage of RNA, removing extra 3' nucleotides from tRNA precursor, generating 3' termini of tRNAs. A 3'-hydroxy group is left at the tRNA terminus and a 5'-phosphoryl group is left at the trailer molecule.</text>
        <dbReference type="EC" id="3.1.26.11"/>
    </reaction>
</comment>
<comment type="cofactor">
    <cofactor evidence="1">
        <name>Zn(2+)</name>
        <dbReference type="ChEBI" id="CHEBI:29105"/>
    </cofactor>
    <text evidence="1">Binds 2 Zn(2+) ions.</text>
</comment>
<comment type="subunit">
    <text evidence="1">Homodimer.</text>
</comment>
<comment type="similarity">
    <text evidence="1">Belongs to the RNase Z family.</text>
</comment>
<sequence length="307" mass="33543">MELLFLGTGAGVPAKERNVSSVALQLLGERGATWLFDCGEATQHQILHTAIRPRRIEHIFITHLHGDHLFGLPGLLGSRSFQSGETPLTVFGPKGIRSFVETALAVSGTKLRYELNIVEIDEGVIFDDERFSVIAKRLDHGMPSYGFRVVEKDLPGPLLVERLQALGVRPGPIYQEIKQGKTVVLDDGTVIDGREFVGPPQKGRIVAVLGDTRFCEAAIELARDADVVVHEATFAAAEQRLAHDYFHSTTTDAAEVARRAGAKRLILTHISSRYQGEAALQLVAEARSVFPNTELAVDFASFSIPRG</sequence>
<feature type="chain" id="PRO_0000155867" description="Ribonuclease Z">
    <location>
        <begin position="1"/>
        <end position="307"/>
    </location>
</feature>
<feature type="active site" description="Proton acceptor" evidence="1">
    <location>
        <position position="67"/>
    </location>
</feature>
<feature type="binding site" evidence="1">
    <location>
        <position position="63"/>
    </location>
    <ligand>
        <name>Zn(2+)</name>
        <dbReference type="ChEBI" id="CHEBI:29105"/>
        <label>1</label>
        <note>catalytic</note>
    </ligand>
</feature>
<feature type="binding site" evidence="1">
    <location>
        <position position="65"/>
    </location>
    <ligand>
        <name>Zn(2+)</name>
        <dbReference type="ChEBI" id="CHEBI:29105"/>
        <label>1</label>
        <note>catalytic</note>
    </ligand>
</feature>
<feature type="binding site" evidence="1">
    <location>
        <position position="67"/>
    </location>
    <ligand>
        <name>Zn(2+)</name>
        <dbReference type="ChEBI" id="CHEBI:29105"/>
        <label>2</label>
        <note>catalytic</note>
    </ligand>
</feature>
<feature type="binding site" evidence="1">
    <location>
        <position position="68"/>
    </location>
    <ligand>
        <name>Zn(2+)</name>
        <dbReference type="ChEBI" id="CHEBI:29105"/>
        <label>2</label>
        <note>catalytic</note>
    </ligand>
</feature>
<feature type="binding site" evidence="1">
    <location>
        <position position="140"/>
    </location>
    <ligand>
        <name>Zn(2+)</name>
        <dbReference type="ChEBI" id="CHEBI:29105"/>
        <label>1</label>
        <note>catalytic</note>
    </ligand>
</feature>
<feature type="binding site" evidence="1">
    <location>
        <position position="211"/>
    </location>
    <ligand>
        <name>Zn(2+)</name>
        <dbReference type="ChEBI" id="CHEBI:29105"/>
        <label>1</label>
        <note>catalytic</note>
    </ligand>
</feature>
<feature type="binding site" evidence="1">
    <location>
        <position position="211"/>
    </location>
    <ligand>
        <name>Zn(2+)</name>
        <dbReference type="ChEBI" id="CHEBI:29105"/>
        <label>2</label>
        <note>catalytic</note>
    </ligand>
</feature>
<feature type="binding site" evidence="1">
    <location>
        <position position="269"/>
    </location>
    <ligand>
        <name>Zn(2+)</name>
        <dbReference type="ChEBI" id="CHEBI:29105"/>
        <label>2</label>
        <note>catalytic</note>
    </ligand>
</feature>
<protein>
    <recommendedName>
        <fullName evidence="1">Ribonuclease Z</fullName>
        <shortName evidence="1">RNase Z</shortName>
        <ecNumber evidence="1">3.1.26.11</ecNumber>
    </recommendedName>
    <alternativeName>
        <fullName evidence="1">tRNA 3 endonuclease</fullName>
    </alternativeName>
    <alternativeName>
        <fullName evidence="1">tRNase Z</fullName>
    </alternativeName>
</protein>
<accession>Q5KXG8</accession>